<protein>
    <recommendedName>
        <fullName evidence="1">Hydroxyacylglutathione hydrolase</fullName>
        <ecNumber evidence="1">3.1.2.6</ecNumber>
    </recommendedName>
    <alternativeName>
        <fullName evidence="1">Glyoxalase II</fullName>
        <shortName evidence="1">Glx II</shortName>
    </alternativeName>
</protein>
<reference key="1">
    <citation type="journal article" date="2008" name="PLoS Genet.">
        <title>Complete genome sequence of the complex carbohydrate-degrading marine bacterium, Saccharophagus degradans strain 2-40 T.</title>
        <authorList>
            <person name="Weiner R.M."/>
            <person name="Taylor L.E. II"/>
            <person name="Henrissat B."/>
            <person name="Hauser L."/>
            <person name="Land M."/>
            <person name="Coutinho P.M."/>
            <person name="Rancurel C."/>
            <person name="Saunders E.H."/>
            <person name="Longmire A.G."/>
            <person name="Zhang H."/>
            <person name="Bayer E.A."/>
            <person name="Gilbert H.J."/>
            <person name="Larimer F."/>
            <person name="Zhulin I.B."/>
            <person name="Ekborg N.A."/>
            <person name="Lamed R."/>
            <person name="Richardson P.M."/>
            <person name="Borovok I."/>
            <person name="Hutcheson S."/>
        </authorList>
    </citation>
    <scope>NUCLEOTIDE SEQUENCE [LARGE SCALE GENOMIC DNA]</scope>
    <source>
        <strain>2-40 / ATCC 43961 / DSM 17024</strain>
    </source>
</reference>
<gene>
    <name evidence="1" type="primary">gloB</name>
    <name type="ordered locus">Sde_2023</name>
</gene>
<keyword id="KW-0378">Hydrolase</keyword>
<keyword id="KW-0479">Metal-binding</keyword>
<keyword id="KW-1185">Reference proteome</keyword>
<keyword id="KW-0862">Zinc</keyword>
<organism>
    <name type="scientific">Saccharophagus degradans (strain 2-40 / ATCC 43961 / DSM 17024)</name>
    <dbReference type="NCBI Taxonomy" id="203122"/>
    <lineage>
        <taxon>Bacteria</taxon>
        <taxon>Pseudomonadati</taxon>
        <taxon>Pseudomonadota</taxon>
        <taxon>Gammaproteobacteria</taxon>
        <taxon>Cellvibrionales</taxon>
        <taxon>Cellvibrionaceae</taxon>
        <taxon>Saccharophagus</taxon>
    </lineage>
</organism>
<dbReference type="EC" id="3.1.2.6" evidence="1"/>
<dbReference type="EMBL" id="CP000282">
    <property type="protein sequence ID" value="ABD81283.1"/>
    <property type="molecule type" value="Genomic_DNA"/>
</dbReference>
<dbReference type="SMR" id="Q21J46"/>
<dbReference type="STRING" id="203122.Sde_2023"/>
<dbReference type="KEGG" id="sde:Sde_2023"/>
<dbReference type="eggNOG" id="COG0491">
    <property type="taxonomic scope" value="Bacteria"/>
</dbReference>
<dbReference type="HOGENOM" id="CLU_030571_4_1_6"/>
<dbReference type="UniPathway" id="UPA00619">
    <property type="reaction ID" value="UER00676"/>
</dbReference>
<dbReference type="Proteomes" id="UP000001947">
    <property type="component" value="Chromosome"/>
</dbReference>
<dbReference type="GO" id="GO:0004416">
    <property type="term" value="F:hydroxyacylglutathione hydrolase activity"/>
    <property type="evidence" value="ECO:0007669"/>
    <property type="project" value="UniProtKB-UniRule"/>
</dbReference>
<dbReference type="GO" id="GO:0046872">
    <property type="term" value="F:metal ion binding"/>
    <property type="evidence" value="ECO:0007669"/>
    <property type="project" value="UniProtKB-KW"/>
</dbReference>
<dbReference type="GO" id="GO:0019243">
    <property type="term" value="P:methylglyoxal catabolic process to D-lactate via S-lactoyl-glutathione"/>
    <property type="evidence" value="ECO:0007669"/>
    <property type="project" value="InterPro"/>
</dbReference>
<dbReference type="CDD" id="cd07723">
    <property type="entry name" value="hydroxyacylglutathione_hydrolase_MBL-fold"/>
    <property type="match status" value="1"/>
</dbReference>
<dbReference type="Gene3D" id="3.60.15.10">
    <property type="entry name" value="Ribonuclease Z/Hydroxyacylglutathione hydrolase-like"/>
    <property type="match status" value="1"/>
</dbReference>
<dbReference type="HAMAP" id="MF_01374">
    <property type="entry name" value="Glyoxalase_2"/>
    <property type="match status" value="1"/>
</dbReference>
<dbReference type="InterPro" id="IPR035680">
    <property type="entry name" value="Clx_II_MBL"/>
</dbReference>
<dbReference type="InterPro" id="IPR050110">
    <property type="entry name" value="Glyoxalase_II_hydrolase"/>
</dbReference>
<dbReference type="InterPro" id="IPR032282">
    <property type="entry name" value="HAGH_C"/>
</dbReference>
<dbReference type="InterPro" id="IPR017782">
    <property type="entry name" value="Hydroxyacylglutathione_Hdrlase"/>
</dbReference>
<dbReference type="InterPro" id="IPR001279">
    <property type="entry name" value="Metallo-B-lactamas"/>
</dbReference>
<dbReference type="InterPro" id="IPR036866">
    <property type="entry name" value="RibonucZ/Hydroxyglut_hydro"/>
</dbReference>
<dbReference type="NCBIfam" id="TIGR03413">
    <property type="entry name" value="GSH_gloB"/>
    <property type="match status" value="1"/>
</dbReference>
<dbReference type="PANTHER" id="PTHR43705">
    <property type="entry name" value="HYDROXYACYLGLUTATHIONE HYDROLASE"/>
    <property type="match status" value="1"/>
</dbReference>
<dbReference type="PANTHER" id="PTHR43705:SF1">
    <property type="entry name" value="HYDROXYACYLGLUTATHIONE HYDROLASE GLOB"/>
    <property type="match status" value="1"/>
</dbReference>
<dbReference type="Pfam" id="PF16123">
    <property type="entry name" value="HAGH_C"/>
    <property type="match status" value="1"/>
</dbReference>
<dbReference type="Pfam" id="PF00753">
    <property type="entry name" value="Lactamase_B"/>
    <property type="match status" value="1"/>
</dbReference>
<dbReference type="PIRSF" id="PIRSF005457">
    <property type="entry name" value="Glx"/>
    <property type="match status" value="1"/>
</dbReference>
<dbReference type="SMART" id="SM00849">
    <property type="entry name" value="Lactamase_B"/>
    <property type="match status" value="1"/>
</dbReference>
<dbReference type="SUPFAM" id="SSF56281">
    <property type="entry name" value="Metallo-hydrolase/oxidoreductase"/>
    <property type="match status" value="1"/>
</dbReference>
<accession>Q21J46</accession>
<evidence type="ECO:0000255" key="1">
    <source>
        <dbReference type="HAMAP-Rule" id="MF_01374"/>
    </source>
</evidence>
<proteinExistence type="inferred from homology"/>
<name>GLO2_SACD2</name>
<comment type="function">
    <text evidence="1">Thiolesterase that catalyzes the hydrolysis of S-D-lactoyl-glutathione to form glutathione and D-lactic acid.</text>
</comment>
<comment type="catalytic activity">
    <reaction evidence="1">
        <text>an S-(2-hydroxyacyl)glutathione + H2O = a 2-hydroxy carboxylate + glutathione + H(+)</text>
        <dbReference type="Rhea" id="RHEA:21864"/>
        <dbReference type="ChEBI" id="CHEBI:15377"/>
        <dbReference type="ChEBI" id="CHEBI:15378"/>
        <dbReference type="ChEBI" id="CHEBI:57925"/>
        <dbReference type="ChEBI" id="CHEBI:58896"/>
        <dbReference type="ChEBI" id="CHEBI:71261"/>
        <dbReference type="EC" id="3.1.2.6"/>
    </reaction>
</comment>
<comment type="cofactor">
    <cofactor evidence="1">
        <name>Zn(2+)</name>
        <dbReference type="ChEBI" id="CHEBI:29105"/>
    </cofactor>
    <text evidence="1">Binds 2 Zn(2+) ions per subunit.</text>
</comment>
<comment type="pathway">
    <text evidence="1">Secondary metabolite metabolism; methylglyoxal degradation; (R)-lactate from methylglyoxal: step 2/2.</text>
</comment>
<comment type="subunit">
    <text evidence="1">Monomer.</text>
</comment>
<comment type="similarity">
    <text evidence="1">Belongs to the metallo-beta-lactamase superfamily. Glyoxalase II family.</text>
</comment>
<sequence length="272" mass="30672">MNMQLGSPVSVHPIPIYQGNYVWVMRHTSQNSVVVVDPGSASEVIEYITQHELTIASIIITHSHWDHVTGIAELCANLQLWRDEEPVVYGPSVIQDVTHPVEDGDRIELCKGVDVPSLQVIATPGHMPEHLSYLLPLTTPKLFCGDTLFSCGCGRILQGTHEQLRTSLDAISALPSQTEVYCTHEYTLTNIKFARTVEPQSQALIDYEQRVRSLRKNDLPSIPTTIEREKALNPFLRYKELSIQQAVENHLRLKGLTAADVFKHLRLWKDSF</sequence>
<feature type="chain" id="PRO_0000309700" description="Hydroxyacylglutathione hydrolase">
    <location>
        <begin position="1"/>
        <end position="272"/>
    </location>
</feature>
<feature type="binding site" evidence="1">
    <location>
        <position position="62"/>
    </location>
    <ligand>
        <name>Zn(2+)</name>
        <dbReference type="ChEBI" id="CHEBI:29105"/>
        <label>1</label>
    </ligand>
</feature>
<feature type="binding site" evidence="1">
    <location>
        <position position="64"/>
    </location>
    <ligand>
        <name>Zn(2+)</name>
        <dbReference type="ChEBI" id="CHEBI:29105"/>
        <label>1</label>
    </ligand>
</feature>
<feature type="binding site" evidence="1">
    <location>
        <position position="66"/>
    </location>
    <ligand>
        <name>Zn(2+)</name>
        <dbReference type="ChEBI" id="CHEBI:29105"/>
        <label>2</label>
    </ligand>
</feature>
<feature type="binding site" evidence="1">
    <location>
        <position position="67"/>
    </location>
    <ligand>
        <name>Zn(2+)</name>
        <dbReference type="ChEBI" id="CHEBI:29105"/>
        <label>2</label>
    </ligand>
</feature>
<feature type="binding site" evidence="1">
    <location>
        <position position="126"/>
    </location>
    <ligand>
        <name>Zn(2+)</name>
        <dbReference type="ChEBI" id="CHEBI:29105"/>
        <label>1</label>
    </ligand>
</feature>
<feature type="binding site" evidence="1">
    <location>
        <position position="146"/>
    </location>
    <ligand>
        <name>Zn(2+)</name>
        <dbReference type="ChEBI" id="CHEBI:29105"/>
        <label>1</label>
    </ligand>
</feature>
<feature type="binding site" evidence="1">
    <location>
        <position position="146"/>
    </location>
    <ligand>
        <name>Zn(2+)</name>
        <dbReference type="ChEBI" id="CHEBI:29105"/>
        <label>2</label>
    </ligand>
</feature>
<feature type="binding site" evidence="1">
    <location>
        <position position="184"/>
    </location>
    <ligand>
        <name>Zn(2+)</name>
        <dbReference type="ChEBI" id="CHEBI:29105"/>
        <label>2</label>
    </ligand>
</feature>